<keyword id="KW-0002">3D-structure</keyword>
<keyword id="KW-0044">Antibiotic</keyword>
<keyword id="KW-0929">Antimicrobial</keyword>
<keyword id="KW-0078">Bacteriocin</keyword>
<keyword id="KW-0425">Lantibiotic</keyword>
<keyword id="KW-0883">Thioether bond</keyword>
<organism>
    <name type="scientific">Lactococcus lactis subsp. lactis</name>
    <name type="common">Streptococcus lactis</name>
    <dbReference type="NCBI Taxonomy" id="1360"/>
    <lineage>
        <taxon>Bacteria</taxon>
        <taxon>Bacillati</taxon>
        <taxon>Bacillota</taxon>
        <taxon>Bacilli</taxon>
        <taxon>Lactobacillales</taxon>
        <taxon>Streptococcaceae</taxon>
        <taxon>Lactococcus</taxon>
    </lineage>
</organism>
<protein>
    <recommendedName>
        <fullName>Lantibiotic nisin-Z</fullName>
    </recommendedName>
</protein>
<dbReference type="EMBL" id="X61144">
    <property type="protein sequence ID" value="CAA43440.1"/>
    <property type="molecule type" value="Genomic_DNA"/>
</dbReference>
<dbReference type="EMBL" id="D10768">
    <property type="protein sequence ID" value="BAA01598.1"/>
    <property type="molecule type" value="Genomic_DNA"/>
</dbReference>
<dbReference type="EMBL" id="Z18947">
    <property type="protein sequence ID" value="CAA79467.1"/>
    <property type="molecule type" value="Genomic_DNA"/>
</dbReference>
<dbReference type="RefSeq" id="WP_015425978.1">
    <property type="nucleotide sequence ID" value="NZ_QYRO01000015.1"/>
</dbReference>
<dbReference type="PDB" id="1WCO">
    <property type="method" value="NMR"/>
    <property type="chains" value="N=24-57"/>
</dbReference>
<dbReference type="PDB" id="6M7Y">
    <property type="method" value="X-ray"/>
    <property type="resolution" value="2.79 A"/>
    <property type="chains" value="C/D=2-35"/>
</dbReference>
<dbReference type="PDBsum" id="1WCO"/>
<dbReference type="PDBsum" id="6M7Y"/>
<dbReference type="BMRB" id="P29559"/>
<dbReference type="SMR" id="P29559"/>
<dbReference type="DrugBank" id="DB07780">
    <property type="generic name" value="Farnesyl diphosphate"/>
</dbReference>
<dbReference type="EvolutionaryTrace" id="P29559"/>
<dbReference type="GO" id="GO:0005576">
    <property type="term" value="C:extracellular region"/>
    <property type="evidence" value="ECO:0007669"/>
    <property type="project" value="InterPro"/>
</dbReference>
<dbReference type="GO" id="GO:0005102">
    <property type="term" value="F:signaling receptor binding"/>
    <property type="evidence" value="ECO:0007669"/>
    <property type="project" value="UniProtKB-KW"/>
</dbReference>
<dbReference type="GO" id="GO:0042742">
    <property type="term" value="P:defense response to bacterium"/>
    <property type="evidence" value="ECO:0007669"/>
    <property type="project" value="UniProtKB-KW"/>
</dbReference>
<dbReference type="GO" id="GO:0031640">
    <property type="term" value="P:killing of cells of another organism"/>
    <property type="evidence" value="ECO:0007669"/>
    <property type="project" value="UniProtKB-KW"/>
</dbReference>
<dbReference type="InterPro" id="IPR006079">
    <property type="entry name" value="Lantibiotic_typ-A_Bacillales"/>
</dbReference>
<dbReference type="NCBIfam" id="TIGR03731">
    <property type="entry name" value="lantibio_gallid"/>
    <property type="match status" value="1"/>
</dbReference>
<dbReference type="Pfam" id="PF02052">
    <property type="entry name" value="Gallidermin"/>
    <property type="match status" value="1"/>
</dbReference>
<dbReference type="PRINTS" id="PR00324">
    <property type="entry name" value="NISIN"/>
</dbReference>
<evidence type="ECO:0000269" key="1">
    <source>
    </source>
</evidence>
<evidence type="ECO:0000305" key="2"/>
<evidence type="ECO:0007829" key="3">
    <source>
        <dbReference type="PDB" id="1WCO"/>
    </source>
</evidence>
<evidence type="ECO:0007829" key="4">
    <source>
        <dbReference type="PDB" id="6M7Y"/>
    </source>
</evidence>
<accession>P29559</accession>
<name>LANZ_LACLL</name>
<comment type="function">
    <text>Lanthionine-containing peptide antibiotic (lantibiotic) active on Gram-positive bacteria. The bactericidal activity of lantibiotics is based on depolarization of energized bacterial cytoplasmic membranes, initiated by the formation of aqueous transmembrane pores.</text>
</comment>
<comment type="PTM">
    <text>Maturation of lantibiotics involves the enzymatic conversion of Thr, and Ser into dehydrated AA and the formation of thioether bonds with cysteine. This is followed by membrane translocation and cleavage of the modified precursor.</text>
</comment>
<comment type="PTM">
    <text>The structure of the 2,3-didehydrobutyrine is not discussed in PubMed:15361862. It is probably the Z-isomer by similarity.</text>
</comment>
<comment type="similarity">
    <text evidence="2">Belongs to the type A lantibiotic family.</text>
</comment>
<sequence>MSTKDFNLDLVSVSKKDSGASPRITSISLCTPGCKTGALMGCNMKTATCNCSIHVSK</sequence>
<gene>
    <name type="primary">nisZ</name>
</gene>
<proteinExistence type="evidence at protein level"/>
<feature type="propeptide" id="PRO_0000017124">
    <location>
        <begin position="1"/>
        <end position="23"/>
    </location>
</feature>
<feature type="peptide" id="PRO_0000017125" description="Lantibiotic nisin-Z">
    <location>
        <begin position="24"/>
        <end position="57"/>
    </location>
</feature>
<feature type="modified residue" description="2,3-didehydrobutyrine" evidence="1">
    <location>
        <position position="25"/>
    </location>
</feature>
<feature type="modified residue" description="2,3-didehydroalanine (Ser)" evidence="1">
    <location>
        <position position="28"/>
    </location>
</feature>
<feature type="modified residue" description="2,3-didehydroalanine (Ser)" evidence="1">
    <location>
        <position position="56"/>
    </location>
</feature>
<feature type="cross-link" description="Lanthionine (Ser-Cys)" evidence="1">
    <location>
        <begin position="26"/>
        <end position="30"/>
    </location>
</feature>
<feature type="cross-link" description="Beta-methyllanthionine (Thr-Cys)" evidence="1">
    <location>
        <begin position="31"/>
        <end position="34"/>
    </location>
</feature>
<feature type="cross-link" description="Beta-methyllanthionine (Thr-Cys)" evidence="1">
    <location>
        <begin position="36"/>
        <end position="42"/>
    </location>
</feature>
<feature type="cross-link" description="Beta-methyllanthionine (Thr-Cys)" evidence="1">
    <location>
        <begin position="46"/>
        <end position="49"/>
    </location>
</feature>
<feature type="cross-link" description="Beta-methyllanthionine (Thr-Cys)" evidence="1">
    <location>
        <begin position="48"/>
        <end position="51"/>
    </location>
</feature>
<feature type="sequence variant" description="In strain: JCM 7638.">
    <original>N</original>
    <variation>H</variation>
    <location>
        <position position="50"/>
    </location>
</feature>
<feature type="strand" evidence="4">
    <location>
        <begin position="11"/>
        <end position="13"/>
    </location>
</feature>
<feature type="helix" evidence="3">
    <location>
        <begin position="32"/>
        <end position="35"/>
    </location>
</feature>
<feature type="turn" evidence="3">
    <location>
        <begin position="38"/>
        <end position="40"/>
    </location>
</feature>
<reference key="1">
    <citation type="journal article" date="1991" name="Eur. J. Biochem.">
        <title>Identification and characterization of the lantibiotic nisin Z, a natural nisin variant.</title>
        <authorList>
            <person name="Mulders J.W.M."/>
            <person name="Boerrigter I.J."/>
            <person name="Rollema H.S."/>
            <person name="Siezen R.J."/>
            <person name="de Vos W.M."/>
        </authorList>
    </citation>
    <scope>NUCLEOTIDE SEQUENCE [GENOMIC DNA]</scope>
    <source>
        <strain>NIZO 22186</strain>
    </source>
</reference>
<reference key="2">
    <citation type="journal article" date="1992" name="J. Gen. Appl. Microbiol.">
        <title>Genetic evidence that Lactococcus lactis JCM7638 produces a mutated form of nisin.</title>
        <authorList>
            <person name="Araya T."/>
            <person name="Ishibashi N."/>
            <person name="Shimamura S."/>
        </authorList>
    </citation>
    <scope>NUCLEOTIDE SEQUENCE [GENOMIC DNA]</scope>
    <source>
        <strain>CIP 103449 / JCM 7638</strain>
    </source>
</reference>
<reference key="3">
    <citation type="journal article" date="1995" name="DNA Seq.">
        <title>The codon usage of the nisZ operon in Lactococcus lactis N8 suggests a non-lactococcal origin of the conjugative nisin-sucrose transposon.</title>
        <authorList>
            <person name="Immonen T."/>
            <person name="Ye S."/>
            <person name="Ra R."/>
            <person name="Qiao M."/>
            <person name="Paulin L."/>
            <person name="Saris P.E.J."/>
        </authorList>
    </citation>
    <scope>NUCLEOTIDE SEQUENCE [GENOMIC DNA]</scope>
    <source>
        <strain>N8</strain>
    </source>
</reference>
<reference key="4">
    <citation type="journal article" date="2004" name="Nat. Struct. Mol. Biol.">
        <title>The nisin-lipid II complex reveals a pyrophosphate cage that provides a blueprint for novel antibiotics.</title>
        <authorList>
            <person name="Hsu S.T."/>
            <person name="Breukink E."/>
            <person name="Tischenko E."/>
            <person name="Lutters M.A."/>
            <person name="de Kruijff B."/>
            <person name="Kaptein R."/>
            <person name="Bonvin A.M."/>
            <person name="van Nuland N.A."/>
        </authorList>
    </citation>
    <scope>STRUCTURE BY NMR OF 24-57</scope>
    <scope>DEHYDRATION AT THR-25; SER-28 AND SER-56</scope>
    <scope>LANTHIONINE CROSS-LINKS</scope>
</reference>